<organism>
    <name type="scientific">Fasciola hepatica</name>
    <name type="common">Liver fluke</name>
    <dbReference type="NCBI Taxonomy" id="6192"/>
    <lineage>
        <taxon>Eukaryota</taxon>
        <taxon>Metazoa</taxon>
        <taxon>Spiralia</taxon>
        <taxon>Lophotrochozoa</taxon>
        <taxon>Platyhelminthes</taxon>
        <taxon>Trematoda</taxon>
        <taxon>Digenea</taxon>
        <taxon>Plagiorchiida</taxon>
        <taxon>Echinostomata</taxon>
        <taxon>Echinostomatoidea</taxon>
        <taxon>Fasciolidae</taxon>
        <taxon>Fasciola</taxon>
    </lineage>
</organism>
<sequence>YPDGFDGEAV</sequence>
<accession>P80525</accession>
<dbReference type="EC" id="4.1.1.32"/>
<dbReference type="GO" id="GO:0005525">
    <property type="term" value="F:GTP binding"/>
    <property type="evidence" value="ECO:0007669"/>
    <property type="project" value="UniProtKB-KW"/>
</dbReference>
<dbReference type="GO" id="GO:0046872">
    <property type="term" value="F:metal ion binding"/>
    <property type="evidence" value="ECO:0007669"/>
    <property type="project" value="UniProtKB-KW"/>
</dbReference>
<dbReference type="GO" id="GO:0004613">
    <property type="term" value="F:phosphoenolpyruvate carboxykinase (GTP) activity"/>
    <property type="evidence" value="ECO:0007669"/>
    <property type="project" value="UniProtKB-EC"/>
</dbReference>
<proteinExistence type="evidence at protein level"/>
<reference key="1">
    <citation type="journal article" date="1995" name="Biochem. Biophys. Res. Commun.">
        <title>Fasciola hepatica: rapid identification of newly excysted juvenile proteins.</title>
        <authorList>
            <person name="Tkalcevic J."/>
            <person name="Ashman K."/>
            <person name="Meeusen E."/>
        </authorList>
    </citation>
    <scope>PROTEIN SEQUENCE</scope>
</reference>
<comment type="function">
    <text evidence="1">Catalyzes the conversion of oxaloacetate (OAA) to phosphoenolpyruvate (PEP), the rate-limiting step in the metabolic pathway that produces glucose from lactate and other precursors derived from the citric acid cycle.</text>
</comment>
<comment type="catalytic activity">
    <reaction evidence="2">
        <text>oxaloacetate + GTP = phosphoenolpyruvate + GDP + CO2</text>
        <dbReference type="Rhea" id="RHEA:10388"/>
        <dbReference type="ChEBI" id="CHEBI:16452"/>
        <dbReference type="ChEBI" id="CHEBI:16526"/>
        <dbReference type="ChEBI" id="CHEBI:37565"/>
        <dbReference type="ChEBI" id="CHEBI:58189"/>
        <dbReference type="ChEBI" id="CHEBI:58702"/>
        <dbReference type="EC" id="4.1.1.32"/>
    </reaction>
</comment>
<comment type="cofactor">
    <cofactor evidence="1">
        <name>Mn(2+)</name>
        <dbReference type="ChEBI" id="CHEBI:29035"/>
    </cofactor>
    <text evidence="1">Binds 1 Mn(2+) ion per subunit.</text>
</comment>
<comment type="subunit">
    <text>Monomer.</text>
</comment>
<comment type="similarity">
    <text evidence="3">Belongs to the phosphoenolpyruvate carboxykinase [GTP] family.</text>
</comment>
<feature type="chain" id="PRO_0000103634" description="Putative phosphoenolpyruvate carboxykinase [GTP]">
    <location>
        <begin position="1"/>
        <end position="10" status="greater than"/>
    </location>
</feature>
<feature type="non-terminal residue">
    <location>
        <position position="10"/>
    </location>
</feature>
<name>PCKG_FASHE</name>
<evidence type="ECO:0000250" key="1"/>
<evidence type="ECO:0000255" key="2">
    <source>
        <dbReference type="PROSITE-ProRule" id="PRU10113"/>
    </source>
</evidence>
<evidence type="ECO:0000305" key="3"/>
<keyword id="KW-0210">Decarboxylase</keyword>
<keyword id="KW-0903">Direct protein sequencing</keyword>
<keyword id="KW-0342">GTP-binding</keyword>
<keyword id="KW-0456">Lyase</keyword>
<keyword id="KW-0464">Manganese</keyword>
<keyword id="KW-0479">Metal-binding</keyword>
<keyword id="KW-0547">Nucleotide-binding</keyword>
<protein>
    <recommendedName>
        <fullName>Putative phosphoenolpyruvate carboxykinase [GTP]</fullName>
        <shortName>PEPCK</shortName>
        <ecNumber>4.1.1.32</ecNumber>
    </recommendedName>
    <alternativeName>
        <fullName>Newly excysted juvenile protein 1</fullName>
    </alternativeName>
</protein>